<protein>
    <recommendedName>
        <fullName>Uncharacterized protein MT0457</fullName>
    </recommendedName>
</protein>
<keyword id="KW-1185">Reference proteome</keyword>
<dbReference type="EMBL" id="AE000516">
    <property type="protein sequence ID" value="AAK44680.1"/>
    <property type="molecule type" value="Genomic_DNA"/>
</dbReference>
<dbReference type="PIR" id="B70830">
    <property type="entry name" value="B70830"/>
</dbReference>
<dbReference type="RefSeq" id="WP_003402238.1">
    <property type="nucleotide sequence ID" value="NZ_KK341227.1"/>
</dbReference>
<dbReference type="SMR" id="P9WKW2"/>
<dbReference type="KEGG" id="mtc:MT0457"/>
<dbReference type="PATRIC" id="fig|83331.31.peg.484"/>
<dbReference type="HOGENOM" id="CLU_139629_0_0_11"/>
<dbReference type="Proteomes" id="UP000001020">
    <property type="component" value="Chromosome"/>
</dbReference>
<dbReference type="Gene3D" id="2.30.110.10">
    <property type="entry name" value="Electron Transport, Fmn-binding Protein, Chain A"/>
    <property type="match status" value="1"/>
</dbReference>
<dbReference type="InterPro" id="IPR012349">
    <property type="entry name" value="Split_barrel_FMN-bd"/>
</dbReference>
<dbReference type="SUPFAM" id="SSF50475">
    <property type="entry name" value="FMN-binding split barrel"/>
    <property type="match status" value="1"/>
</dbReference>
<sequence>MGAKKVDLKRLAAALPDYPFAYLITVDDGHRVHTVAVEPVLRELPDGPDGPRAVVDVGLIGGRTRQNLAHRSEVTLLWPPSDPSGYSLIVDGRAQASDAGPDDDTARCGVVPIRALLHRDAAPDSPTAAKGCLHDCVVFSVP</sequence>
<accession>P9WKW2</accession>
<accession>L0T6N9</accession>
<accession>P0A5C7</accession>
<accession>Q50813</accession>
<gene>
    <name type="ordered locus">MT0457</name>
</gene>
<name>Y441_MYCTO</name>
<proteinExistence type="predicted"/>
<organism>
    <name type="scientific">Mycobacterium tuberculosis (strain CDC 1551 / Oshkosh)</name>
    <dbReference type="NCBI Taxonomy" id="83331"/>
    <lineage>
        <taxon>Bacteria</taxon>
        <taxon>Bacillati</taxon>
        <taxon>Actinomycetota</taxon>
        <taxon>Actinomycetes</taxon>
        <taxon>Mycobacteriales</taxon>
        <taxon>Mycobacteriaceae</taxon>
        <taxon>Mycobacterium</taxon>
        <taxon>Mycobacterium tuberculosis complex</taxon>
    </lineage>
</organism>
<reference key="1">
    <citation type="journal article" date="2002" name="J. Bacteriol.">
        <title>Whole-genome comparison of Mycobacterium tuberculosis clinical and laboratory strains.</title>
        <authorList>
            <person name="Fleischmann R.D."/>
            <person name="Alland D."/>
            <person name="Eisen J.A."/>
            <person name="Carpenter L."/>
            <person name="White O."/>
            <person name="Peterson J.D."/>
            <person name="DeBoy R.T."/>
            <person name="Dodson R.J."/>
            <person name="Gwinn M.L."/>
            <person name="Haft D.H."/>
            <person name="Hickey E.K."/>
            <person name="Kolonay J.F."/>
            <person name="Nelson W.C."/>
            <person name="Umayam L.A."/>
            <person name="Ermolaeva M.D."/>
            <person name="Salzberg S.L."/>
            <person name="Delcher A."/>
            <person name="Utterback T.R."/>
            <person name="Weidman J.F."/>
            <person name="Khouri H.M."/>
            <person name="Gill J."/>
            <person name="Mikula A."/>
            <person name="Bishai W."/>
            <person name="Jacobs W.R. Jr."/>
            <person name="Venter J.C."/>
            <person name="Fraser C.M."/>
        </authorList>
    </citation>
    <scope>NUCLEOTIDE SEQUENCE [LARGE SCALE GENOMIC DNA]</scope>
    <source>
        <strain>CDC 1551 / Oshkosh</strain>
    </source>
</reference>
<feature type="chain" id="PRO_0000427584" description="Uncharacterized protein MT0457">
    <location>
        <begin position="1"/>
        <end position="142"/>
    </location>
</feature>